<accession>B1LKL6</accession>
<organism>
    <name type="scientific">Escherichia coli (strain SMS-3-5 / SECEC)</name>
    <dbReference type="NCBI Taxonomy" id="439855"/>
    <lineage>
        <taxon>Bacteria</taxon>
        <taxon>Pseudomonadati</taxon>
        <taxon>Pseudomonadota</taxon>
        <taxon>Gammaproteobacteria</taxon>
        <taxon>Enterobacterales</taxon>
        <taxon>Enterobacteriaceae</taxon>
        <taxon>Escherichia</taxon>
    </lineage>
</organism>
<protein>
    <recommendedName>
        <fullName evidence="1">Fluoride-specific ion channel FluC</fullName>
    </recommendedName>
</protein>
<evidence type="ECO:0000255" key="1">
    <source>
        <dbReference type="HAMAP-Rule" id="MF_00454"/>
    </source>
</evidence>
<name>FLUC_ECOSM</name>
<comment type="function">
    <text evidence="1">Fluoride-specific ion channel. Important for reducing fluoride concentration in the cell, thus reducing its toxicity.</text>
</comment>
<comment type="catalytic activity">
    <reaction evidence="1">
        <text>fluoride(in) = fluoride(out)</text>
        <dbReference type="Rhea" id="RHEA:76159"/>
        <dbReference type="ChEBI" id="CHEBI:17051"/>
    </reaction>
    <physiologicalReaction direction="left-to-right" evidence="1">
        <dbReference type="Rhea" id="RHEA:76160"/>
    </physiologicalReaction>
</comment>
<comment type="activity regulation">
    <text evidence="1">Na(+) is not transported, but it plays an essential structural role and its presence is essential for fluoride channel function.</text>
</comment>
<comment type="subcellular location">
    <subcellularLocation>
        <location evidence="1">Cell inner membrane</location>
        <topology evidence="1">Multi-pass membrane protein</topology>
    </subcellularLocation>
</comment>
<comment type="similarity">
    <text evidence="1">Belongs to the fluoride channel Fluc/FEX (TC 1.A.43) family.</text>
</comment>
<sequence length="127" mass="13765">MLQLLLAVFIGGGTGSVARWLLSMRFNPLHQAIPLGTLAANLIGAFIIGMGFAWFSRMTNIDPVWKVLITTGFCGGLTTFSTFSAEVVFLLQEGRFGWALLNVFVNLLGSFAMTALAFWLFSASTAH</sequence>
<feature type="chain" id="PRO_1000125127" description="Fluoride-specific ion channel FluC">
    <location>
        <begin position="1"/>
        <end position="127"/>
    </location>
</feature>
<feature type="transmembrane region" description="Helical" evidence="1">
    <location>
        <begin position="4"/>
        <end position="24"/>
    </location>
</feature>
<feature type="transmembrane region" description="Helical" evidence="1">
    <location>
        <begin position="35"/>
        <end position="55"/>
    </location>
</feature>
<feature type="transmembrane region" description="Helical" evidence="1">
    <location>
        <begin position="71"/>
        <end position="91"/>
    </location>
</feature>
<feature type="transmembrane region" description="Helical" evidence="1">
    <location>
        <begin position="103"/>
        <end position="123"/>
    </location>
</feature>
<feature type="binding site" evidence="1">
    <location>
        <position position="75"/>
    </location>
    <ligand>
        <name>Na(+)</name>
        <dbReference type="ChEBI" id="CHEBI:29101"/>
        <note>structural</note>
    </ligand>
</feature>
<feature type="binding site" evidence="1">
    <location>
        <position position="78"/>
    </location>
    <ligand>
        <name>Na(+)</name>
        <dbReference type="ChEBI" id="CHEBI:29101"/>
        <note>structural</note>
    </ligand>
</feature>
<dbReference type="EMBL" id="CP000970">
    <property type="protein sequence ID" value="ACB20029.1"/>
    <property type="molecule type" value="Genomic_DNA"/>
</dbReference>
<dbReference type="RefSeq" id="WP_000939738.1">
    <property type="nucleotide sequence ID" value="NC_010498.1"/>
</dbReference>
<dbReference type="SMR" id="B1LKL6"/>
<dbReference type="GeneID" id="93776858"/>
<dbReference type="KEGG" id="ecm:EcSMS35_0645"/>
<dbReference type="HOGENOM" id="CLU_114342_3_3_6"/>
<dbReference type="Proteomes" id="UP000007011">
    <property type="component" value="Chromosome"/>
</dbReference>
<dbReference type="GO" id="GO:0005886">
    <property type="term" value="C:plasma membrane"/>
    <property type="evidence" value="ECO:0007669"/>
    <property type="project" value="UniProtKB-SubCell"/>
</dbReference>
<dbReference type="GO" id="GO:0062054">
    <property type="term" value="F:fluoride channel activity"/>
    <property type="evidence" value="ECO:0007669"/>
    <property type="project" value="UniProtKB-UniRule"/>
</dbReference>
<dbReference type="GO" id="GO:0046872">
    <property type="term" value="F:metal ion binding"/>
    <property type="evidence" value="ECO:0007669"/>
    <property type="project" value="UniProtKB-KW"/>
</dbReference>
<dbReference type="GO" id="GO:0140114">
    <property type="term" value="P:cellular detoxification of fluoride"/>
    <property type="evidence" value="ECO:0007669"/>
    <property type="project" value="UniProtKB-UniRule"/>
</dbReference>
<dbReference type="HAMAP" id="MF_00454">
    <property type="entry name" value="FluC"/>
    <property type="match status" value="1"/>
</dbReference>
<dbReference type="InterPro" id="IPR003691">
    <property type="entry name" value="FluC"/>
</dbReference>
<dbReference type="NCBIfam" id="TIGR00494">
    <property type="entry name" value="crcB"/>
    <property type="match status" value="1"/>
</dbReference>
<dbReference type="NCBIfam" id="NF010792">
    <property type="entry name" value="PRK14196.1"/>
    <property type="match status" value="1"/>
</dbReference>
<dbReference type="PANTHER" id="PTHR28259">
    <property type="entry name" value="FLUORIDE EXPORT PROTEIN 1-RELATED"/>
    <property type="match status" value="1"/>
</dbReference>
<dbReference type="PANTHER" id="PTHR28259:SF1">
    <property type="entry name" value="FLUORIDE EXPORT PROTEIN 1-RELATED"/>
    <property type="match status" value="1"/>
</dbReference>
<dbReference type="Pfam" id="PF02537">
    <property type="entry name" value="CRCB"/>
    <property type="match status" value="1"/>
</dbReference>
<reference key="1">
    <citation type="journal article" date="2008" name="J. Bacteriol.">
        <title>Insights into the environmental resistance gene pool from the genome sequence of the multidrug-resistant environmental isolate Escherichia coli SMS-3-5.</title>
        <authorList>
            <person name="Fricke W.F."/>
            <person name="Wright M.S."/>
            <person name="Lindell A.H."/>
            <person name="Harkins D.M."/>
            <person name="Baker-Austin C."/>
            <person name="Ravel J."/>
            <person name="Stepanauskas R."/>
        </authorList>
    </citation>
    <scope>NUCLEOTIDE SEQUENCE [LARGE SCALE GENOMIC DNA]</scope>
    <source>
        <strain>SMS-3-5 / SECEC</strain>
    </source>
</reference>
<proteinExistence type="inferred from homology"/>
<keyword id="KW-0997">Cell inner membrane</keyword>
<keyword id="KW-1003">Cell membrane</keyword>
<keyword id="KW-0407">Ion channel</keyword>
<keyword id="KW-0406">Ion transport</keyword>
<keyword id="KW-0472">Membrane</keyword>
<keyword id="KW-0479">Metal-binding</keyword>
<keyword id="KW-0915">Sodium</keyword>
<keyword id="KW-0812">Transmembrane</keyword>
<keyword id="KW-1133">Transmembrane helix</keyword>
<keyword id="KW-0813">Transport</keyword>
<gene>
    <name evidence="1" type="primary">fluC</name>
    <name evidence="1" type="synonym">crcB</name>
    <name type="ordered locus">EcSMS35_0645</name>
</gene>